<keyword id="KW-0067">ATP-binding</keyword>
<keyword id="KW-0436">Ligase</keyword>
<keyword id="KW-0547">Nucleotide-binding</keyword>
<keyword id="KW-0648">Protein biosynthesis</keyword>
<keyword id="KW-1185">Reference proteome</keyword>
<name>GATC_STRSV</name>
<dbReference type="EC" id="6.3.5.-" evidence="1"/>
<dbReference type="EMBL" id="CP000387">
    <property type="protein sequence ID" value="ABN44012.1"/>
    <property type="molecule type" value="Genomic_DNA"/>
</dbReference>
<dbReference type="RefSeq" id="WP_002896305.1">
    <property type="nucleotide sequence ID" value="NC_009009.1"/>
</dbReference>
<dbReference type="RefSeq" id="YP_001034562.1">
    <property type="nucleotide sequence ID" value="NC_009009.1"/>
</dbReference>
<dbReference type="SMR" id="A3CLF7"/>
<dbReference type="STRING" id="388919.SSA_0569"/>
<dbReference type="GeneID" id="48424997"/>
<dbReference type="KEGG" id="ssa:SSA_0569"/>
<dbReference type="PATRIC" id="fig|388919.9.peg.548"/>
<dbReference type="eggNOG" id="COG0721">
    <property type="taxonomic scope" value="Bacteria"/>
</dbReference>
<dbReference type="HOGENOM" id="CLU_105899_1_2_9"/>
<dbReference type="OrthoDB" id="9813938at2"/>
<dbReference type="Proteomes" id="UP000002148">
    <property type="component" value="Chromosome"/>
</dbReference>
<dbReference type="GO" id="GO:0050566">
    <property type="term" value="F:asparaginyl-tRNA synthase (glutamine-hydrolyzing) activity"/>
    <property type="evidence" value="ECO:0007669"/>
    <property type="project" value="RHEA"/>
</dbReference>
<dbReference type="GO" id="GO:0005524">
    <property type="term" value="F:ATP binding"/>
    <property type="evidence" value="ECO:0007669"/>
    <property type="project" value="UniProtKB-KW"/>
</dbReference>
<dbReference type="GO" id="GO:0050567">
    <property type="term" value="F:glutaminyl-tRNA synthase (glutamine-hydrolyzing) activity"/>
    <property type="evidence" value="ECO:0007669"/>
    <property type="project" value="UniProtKB-UniRule"/>
</dbReference>
<dbReference type="GO" id="GO:0070681">
    <property type="term" value="P:glutaminyl-tRNAGln biosynthesis via transamidation"/>
    <property type="evidence" value="ECO:0007669"/>
    <property type="project" value="TreeGrafter"/>
</dbReference>
<dbReference type="GO" id="GO:0006450">
    <property type="term" value="P:regulation of translational fidelity"/>
    <property type="evidence" value="ECO:0007669"/>
    <property type="project" value="InterPro"/>
</dbReference>
<dbReference type="GO" id="GO:0006412">
    <property type="term" value="P:translation"/>
    <property type="evidence" value="ECO:0007669"/>
    <property type="project" value="UniProtKB-UniRule"/>
</dbReference>
<dbReference type="Gene3D" id="1.10.20.60">
    <property type="entry name" value="Glu-tRNAGln amidotransferase C subunit, N-terminal domain"/>
    <property type="match status" value="1"/>
</dbReference>
<dbReference type="HAMAP" id="MF_00122">
    <property type="entry name" value="GatC"/>
    <property type="match status" value="1"/>
</dbReference>
<dbReference type="InterPro" id="IPR036113">
    <property type="entry name" value="Asp/Glu-ADT_sf_sub_c"/>
</dbReference>
<dbReference type="InterPro" id="IPR003837">
    <property type="entry name" value="GatC"/>
</dbReference>
<dbReference type="NCBIfam" id="TIGR00135">
    <property type="entry name" value="gatC"/>
    <property type="match status" value="1"/>
</dbReference>
<dbReference type="PANTHER" id="PTHR15004">
    <property type="entry name" value="GLUTAMYL-TRNA(GLN) AMIDOTRANSFERASE SUBUNIT C, MITOCHONDRIAL"/>
    <property type="match status" value="1"/>
</dbReference>
<dbReference type="PANTHER" id="PTHR15004:SF0">
    <property type="entry name" value="GLUTAMYL-TRNA(GLN) AMIDOTRANSFERASE SUBUNIT C, MITOCHONDRIAL"/>
    <property type="match status" value="1"/>
</dbReference>
<dbReference type="Pfam" id="PF02686">
    <property type="entry name" value="GatC"/>
    <property type="match status" value="1"/>
</dbReference>
<dbReference type="SUPFAM" id="SSF141000">
    <property type="entry name" value="Glu-tRNAGln amidotransferase C subunit"/>
    <property type="match status" value="1"/>
</dbReference>
<protein>
    <recommendedName>
        <fullName evidence="1">Aspartyl/glutamyl-tRNA(Asn/Gln) amidotransferase subunit C</fullName>
        <shortName evidence="1">Asp/Glu-ADT subunit C</shortName>
        <ecNumber evidence="1">6.3.5.-</ecNumber>
    </recommendedName>
</protein>
<proteinExistence type="inferred from homology"/>
<comment type="function">
    <text evidence="1">Allows the formation of correctly charged Asn-tRNA(Asn) or Gln-tRNA(Gln) through the transamidation of misacylated Asp-tRNA(Asn) or Glu-tRNA(Gln) in organisms which lack either or both of asparaginyl-tRNA or glutaminyl-tRNA synthetases. The reaction takes place in the presence of glutamine and ATP through an activated phospho-Asp-tRNA(Asn) or phospho-Glu-tRNA(Gln).</text>
</comment>
<comment type="catalytic activity">
    <reaction evidence="1">
        <text>L-glutamyl-tRNA(Gln) + L-glutamine + ATP + H2O = L-glutaminyl-tRNA(Gln) + L-glutamate + ADP + phosphate + H(+)</text>
        <dbReference type="Rhea" id="RHEA:17521"/>
        <dbReference type="Rhea" id="RHEA-COMP:9681"/>
        <dbReference type="Rhea" id="RHEA-COMP:9684"/>
        <dbReference type="ChEBI" id="CHEBI:15377"/>
        <dbReference type="ChEBI" id="CHEBI:15378"/>
        <dbReference type="ChEBI" id="CHEBI:29985"/>
        <dbReference type="ChEBI" id="CHEBI:30616"/>
        <dbReference type="ChEBI" id="CHEBI:43474"/>
        <dbReference type="ChEBI" id="CHEBI:58359"/>
        <dbReference type="ChEBI" id="CHEBI:78520"/>
        <dbReference type="ChEBI" id="CHEBI:78521"/>
        <dbReference type="ChEBI" id="CHEBI:456216"/>
    </reaction>
</comment>
<comment type="catalytic activity">
    <reaction evidence="1">
        <text>L-aspartyl-tRNA(Asn) + L-glutamine + ATP + H2O = L-asparaginyl-tRNA(Asn) + L-glutamate + ADP + phosphate + 2 H(+)</text>
        <dbReference type="Rhea" id="RHEA:14513"/>
        <dbReference type="Rhea" id="RHEA-COMP:9674"/>
        <dbReference type="Rhea" id="RHEA-COMP:9677"/>
        <dbReference type="ChEBI" id="CHEBI:15377"/>
        <dbReference type="ChEBI" id="CHEBI:15378"/>
        <dbReference type="ChEBI" id="CHEBI:29985"/>
        <dbReference type="ChEBI" id="CHEBI:30616"/>
        <dbReference type="ChEBI" id="CHEBI:43474"/>
        <dbReference type="ChEBI" id="CHEBI:58359"/>
        <dbReference type="ChEBI" id="CHEBI:78515"/>
        <dbReference type="ChEBI" id="CHEBI:78516"/>
        <dbReference type="ChEBI" id="CHEBI:456216"/>
    </reaction>
</comment>
<comment type="subunit">
    <text evidence="1">Heterotrimer of A, B and C subunits.</text>
</comment>
<comment type="similarity">
    <text evidence="1">Belongs to the GatC family.</text>
</comment>
<evidence type="ECO:0000255" key="1">
    <source>
        <dbReference type="HAMAP-Rule" id="MF_00122"/>
    </source>
</evidence>
<organism>
    <name type="scientific">Streptococcus sanguinis (strain SK36)</name>
    <dbReference type="NCBI Taxonomy" id="388919"/>
    <lineage>
        <taxon>Bacteria</taxon>
        <taxon>Bacillati</taxon>
        <taxon>Bacillota</taxon>
        <taxon>Bacilli</taxon>
        <taxon>Lactobacillales</taxon>
        <taxon>Streptococcaceae</taxon>
        <taxon>Streptococcus</taxon>
    </lineage>
</organism>
<gene>
    <name evidence="1" type="primary">gatC</name>
    <name type="ordered locus">SSA_0569</name>
</gene>
<feature type="chain" id="PRO_1000016224" description="Aspartyl/glutamyl-tRNA(Asn/Gln) amidotransferase subunit C">
    <location>
        <begin position="1"/>
        <end position="100"/>
    </location>
</feature>
<sequence length="100" mass="11142">MKITQEEVSHVAKLSKLAFSPEETAEFATTLTKIVDMVELLNEVDTEGVPFTSNVAANINYMREDVAQPGWNREELFQNVPEKERGYIKVPAILDDGGDA</sequence>
<accession>A3CLF7</accession>
<reference key="1">
    <citation type="journal article" date="2007" name="J. Bacteriol.">
        <title>Genome of the opportunistic pathogen Streptococcus sanguinis.</title>
        <authorList>
            <person name="Xu P."/>
            <person name="Alves J.M."/>
            <person name="Kitten T."/>
            <person name="Brown A."/>
            <person name="Chen Z."/>
            <person name="Ozaki L.S."/>
            <person name="Manque P."/>
            <person name="Ge X."/>
            <person name="Serrano M.G."/>
            <person name="Puiu D."/>
            <person name="Hendricks S."/>
            <person name="Wang Y."/>
            <person name="Chaplin M.D."/>
            <person name="Akan D."/>
            <person name="Paik S."/>
            <person name="Peterson D.L."/>
            <person name="Macrina F.L."/>
            <person name="Buck G.A."/>
        </authorList>
    </citation>
    <scope>NUCLEOTIDE SEQUENCE [LARGE SCALE GENOMIC DNA]</scope>
    <source>
        <strain>SK36</strain>
    </source>
</reference>